<feature type="chain" id="PRO_0000192915" description="V-type proton ATPase subunit G">
    <location>
        <begin position="1"/>
        <end position="108"/>
    </location>
</feature>
<feature type="region of interest" description="Disordered" evidence="2">
    <location>
        <begin position="48"/>
        <end position="89"/>
    </location>
</feature>
<feature type="compositionally biased region" description="Basic and acidic residues" evidence="2">
    <location>
        <begin position="48"/>
        <end position="60"/>
    </location>
</feature>
<feature type="compositionally biased region" description="Polar residues" evidence="2">
    <location>
        <begin position="79"/>
        <end position="89"/>
    </location>
</feature>
<comment type="function">
    <text evidence="1">Subunit of the V1 complex of vacuolar(H+)-ATPase (V-ATPase), a multisubunit enzyme composed of a peripheral complex (V1) that hydrolyzes ATP and a membrane integral complex (V0) that translocates protons (By similarity). V-ATPase is responsible for acidifying and maintaining the pH of intracellular compartments (By similarity).</text>
</comment>
<comment type="subunit">
    <text evidence="1">V-ATPase is a heteromultimeric enzyme composed of a peripheral catalytic V1 complex (components A to H) attached to an integral membrane V0 proton pore complex (components: a, c, c', c'', d, e, f and VOA1).</text>
</comment>
<comment type="subcellular location">
    <subcellularLocation>
        <location evidence="1">Vacuole membrane</location>
        <topology evidence="3">Peripheral membrane protein</topology>
        <orientation evidence="3">Cytoplasmic side</orientation>
    </subcellularLocation>
</comment>
<comment type="similarity">
    <text evidence="3">Belongs to the V-ATPase G subunit family.</text>
</comment>
<name>VATG_SCHPO</name>
<keyword id="KW-0375">Hydrogen ion transport</keyword>
<keyword id="KW-0406">Ion transport</keyword>
<keyword id="KW-0472">Membrane</keyword>
<keyword id="KW-1185">Reference proteome</keyword>
<keyword id="KW-0813">Transport</keyword>
<keyword id="KW-0926">Vacuole</keyword>
<sequence>MSAQTNSGIQQLLEAEKVARNIVEKARQHRTQRLKDARLEAKREIDEYASKKEEEFKKSESQASGIYSQAEAESKKQVQDTFASIETSSQKNSDKVVDAILSITCNVK</sequence>
<organism>
    <name type="scientific">Schizosaccharomyces pombe (strain 972 / ATCC 24843)</name>
    <name type="common">Fission yeast</name>
    <dbReference type="NCBI Taxonomy" id="284812"/>
    <lineage>
        <taxon>Eukaryota</taxon>
        <taxon>Fungi</taxon>
        <taxon>Dikarya</taxon>
        <taxon>Ascomycota</taxon>
        <taxon>Taphrinomycotina</taxon>
        <taxon>Schizosaccharomycetes</taxon>
        <taxon>Schizosaccharomycetales</taxon>
        <taxon>Schizosaccharomycetaceae</taxon>
        <taxon>Schizosaccharomyces</taxon>
    </lineage>
</organism>
<reference key="1">
    <citation type="journal article" date="2002" name="Nature">
        <title>The genome sequence of Schizosaccharomyces pombe.</title>
        <authorList>
            <person name="Wood V."/>
            <person name="Gwilliam R."/>
            <person name="Rajandream M.A."/>
            <person name="Lyne M.H."/>
            <person name="Lyne R."/>
            <person name="Stewart A."/>
            <person name="Sgouros J.G."/>
            <person name="Peat N."/>
            <person name="Hayles J."/>
            <person name="Baker S.G."/>
            <person name="Basham D."/>
            <person name="Bowman S."/>
            <person name="Brooks K."/>
            <person name="Brown D."/>
            <person name="Brown S."/>
            <person name="Chillingworth T."/>
            <person name="Churcher C.M."/>
            <person name="Collins M."/>
            <person name="Connor R."/>
            <person name="Cronin A."/>
            <person name="Davis P."/>
            <person name="Feltwell T."/>
            <person name="Fraser A."/>
            <person name="Gentles S."/>
            <person name="Goble A."/>
            <person name="Hamlin N."/>
            <person name="Harris D.E."/>
            <person name="Hidalgo J."/>
            <person name="Hodgson G."/>
            <person name="Holroyd S."/>
            <person name="Hornsby T."/>
            <person name="Howarth S."/>
            <person name="Huckle E.J."/>
            <person name="Hunt S."/>
            <person name="Jagels K."/>
            <person name="James K.D."/>
            <person name="Jones L."/>
            <person name="Jones M."/>
            <person name="Leather S."/>
            <person name="McDonald S."/>
            <person name="McLean J."/>
            <person name="Mooney P."/>
            <person name="Moule S."/>
            <person name="Mungall K.L."/>
            <person name="Murphy L.D."/>
            <person name="Niblett D."/>
            <person name="Odell C."/>
            <person name="Oliver K."/>
            <person name="O'Neil S."/>
            <person name="Pearson D."/>
            <person name="Quail M.A."/>
            <person name="Rabbinowitsch E."/>
            <person name="Rutherford K.M."/>
            <person name="Rutter S."/>
            <person name="Saunders D."/>
            <person name="Seeger K."/>
            <person name="Sharp S."/>
            <person name="Skelton J."/>
            <person name="Simmonds M.N."/>
            <person name="Squares R."/>
            <person name="Squares S."/>
            <person name="Stevens K."/>
            <person name="Taylor K."/>
            <person name="Taylor R.G."/>
            <person name="Tivey A."/>
            <person name="Walsh S.V."/>
            <person name="Warren T."/>
            <person name="Whitehead S."/>
            <person name="Woodward J.R."/>
            <person name="Volckaert G."/>
            <person name="Aert R."/>
            <person name="Robben J."/>
            <person name="Grymonprez B."/>
            <person name="Weltjens I."/>
            <person name="Vanstreels E."/>
            <person name="Rieger M."/>
            <person name="Schaefer M."/>
            <person name="Mueller-Auer S."/>
            <person name="Gabel C."/>
            <person name="Fuchs M."/>
            <person name="Duesterhoeft A."/>
            <person name="Fritzc C."/>
            <person name="Holzer E."/>
            <person name="Moestl D."/>
            <person name="Hilbert H."/>
            <person name="Borzym K."/>
            <person name="Langer I."/>
            <person name="Beck A."/>
            <person name="Lehrach H."/>
            <person name="Reinhardt R."/>
            <person name="Pohl T.M."/>
            <person name="Eger P."/>
            <person name="Zimmermann W."/>
            <person name="Wedler H."/>
            <person name="Wambutt R."/>
            <person name="Purnelle B."/>
            <person name="Goffeau A."/>
            <person name="Cadieu E."/>
            <person name="Dreano S."/>
            <person name="Gloux S."/>
            <person name="Lelaure V."/>
            <person name="Mottier S."/>
            <person name="Galibert F."/>
            <person name="Aves S.J."/>
            <person name="Xiang Z."/>
            <person name="Hunt C."/>
            <person name="Moore K."/>
            <person name="Hurst S.M."/>
            <person name="Lucas M."/>
            <person name="Rochet M."/>
            <person name="Gaillardin C."/>
            <person name="Tallada V.A."/>
            <person name="Garzon A."/>
            <person name="Thode G."/>
            <person name="Daga R.R."/>
            <person name="Cruzado L."/>
            <person name="Jimenez J."/>
            <person name="Sanchez M."/>
            <person name="del Rey F."/>
            <person name="Benito J."/>
            <person name="Dominguez A."/>
            <person name="Revuelta J.L."/>
            <person name="Moreno S."/>
            <person name="Armstrong J."/>
            <person name="Forsburg S.L."/>
            <person name="Cerutti L."/>
            <person name="Lowe T."/>
            <person name="McCombie W.R."/>
            <person name="Paulsen I."/>
            <person name="Potashkin J."/>
            <person name="Shpakovski G.V."/>
            <person name="Ussery D."/>
            <person name="Barrell B.G."/>
            <person name="Nurse P."/>
        </authorList>
    </citation>
    <scope>NUCLEOTIDE SEQUENCE [LARGE SCALE GENOMIC DNA]</scope>
    <source>
        <strain>972 / ATCC 24843</strain>
    </source>
</reference>
<reference key="2">
    <citation type="submission" date="1998-07" db="EMBL/GenBank/DDBJ databases">
        <title>S.pombe unknown protein.</title>
        <authorList>
            <person name="Kawamukai M."/>
        </authorList>
    </citation>
    <scope>NUCLEOTIDE SEQUENCE [MRNA] OF 57-108</scope>
</reference>
<evidence type="ECO:0000250" key="1">
    <source>
        <dbReference type="UniProtKB" id="P48836"/>
    </source>
</evidence>
<evidence type="ECO:0000256" key="2">
    <source>
        <dbReference type="SAM" id="MobiDB-lite"/>
    </source>
</evidence>
<evidence type="ECO:0000305" key="3"/>
<gene>
    <name type="primary">vma10</name>
    <name type="ORF">SPBC1289.05c</name>
</gene>
<accession>O74174</accession>
<dbReference type="EMBL" id="CU329671">
    <property type="protein sequence ID" value="CAB38685.1"/>
    <property type="molecule type" value="Genomic_DNA"/>
</dbReference>
<dbReference type="EMBL" id="AB016047">
    <property type="protein sequence ID" value="BAA31572.1"/>
    <property type="molecule type" value="mRNA"/>
</dbReference>
<dbReference type="PIR" id="T39356">
    <property type="entry name" value="T39356"/>
</dbReference>
<dbReference type="PIR" id="T43384">
    <property type="entry name" value="T43384"/>
</dbReference>
<dbReference type="RefSeq" id="NP_596829.1">
    <property type="nucleotide sequence ID" value="NM_001023850.2"/>
</dbReference>
<dbReference type="SMR" id="O74174"/>
<dbReference type="FunCoup" id="O74174">
    <property type="interactions" value="139"/>
</dbReference>
<dbReference type="STRING" id="284812.O74174"/>
<dbReference type="iPTMnet" id="O74174"/>
<dbReference type="PaxDb" id="4896-SPBC1289.05c.1"/>
<dbReference type="EnsemblFungi" id="SPBC1289.05c.1">
    <property type="protein sequence ID" value="SPBC1289.05c.1:pep"/>
    <property type="gene ID" value="SPBC1289.05c"/>
</dbReference>
<dbReference type="GeneID" id="2540172"/>
<dbReference type="KEGG" id="spo:2540172"/>
<dbReference type="PomBase" id="SPBC1289.05c">
    <property type="gene designation" value="vma10"/>
</dbReference>
<dbReference type="VEuPathDB" id="FungiDB:SPBC1289.05c"/>
<dbReference type="eggNOG" id="KOG1772">
    <property type="taxonomic scope" value="Eukaryota"/>
</dbReference>
<dbReference type="HOGENOM" id="CLU_125101_0_0_1"/>
<dbReference type="InParanoid" id="O74174"/>
<dbReference type="OMA" id="ARKYRQD"/>
<dbReference type="PhylomeDB" id="O74174"/>
<dbReference type="Reactome" id="R-SPO-1222556">
    <property type="pathway name" value="ROS and RNS production in phagocytes"/>
</dbReference>
<dbReference type="Reactome" id="R-SPO-77387">
    <property type="pathway name" value="Insulin receptor recycling"/>
</dbReference>
<dbReference type="Reactome" id="R-SPO-917977">
    <property type="pathway name" value="Transferrin endocytosis and recycling"/>
</dbReference>
<dbReference type="Reactome" id="R-SPO-9639288">
    <property type="pathway name" value="Amino acids regulate mTORC1"/>
</dbReference>
<dbReference type="PRO" id="PR:O74174"/>
<dbReference type="Proteomes" id="UP000002485">
    <property type="component" value="Chromosome II"/>
</dbReference>
<dbReference type="GO" id="GO:0005829">
    <property type="term" value="C:cytosol"/>
    <property type="evidence" value="ECO:0007005"/>
    <property type="project" value="PomBase"/>
</dbReference>
<dbReference type="GO" id="GO:0005634">
    <property type="term" value="C:nucleus"/>
    <property type="evidence" value="ECO:0007005"/>
    <property type="project" value="PomBase"/>
</dbReference>
<dbReference type="GO" id="GO:0000221">
    <property type="term" value="C:vacuolar proton-transporting V-type ATPase, V1 domain"/>
    <property type="evidence" value="ECO:0000318"/>
    <property type="project" value="GO_Central"/>
</dbReference>
<dbReference type="GO" id="GO:0005524">
    <property type="term" value="F:ATP binding"/>
    <property type="evidence" value="ECO:0000305"/>
    <property type="project" value="PomBase"/>
</dbReference>
<dbReference type="GO" id="GO:0016887">
    <property type="term" value="F:ATP hydrolysis activity"/>
    <property type="evidence" value="ECO:0000318"/>
    <property type="project" value="GO_Central"/>
</dbReference>
<dbReference type="GO" id="GO:0046961">
    <property type="term" value="F:proton-transporting ATPase activity, rotational mechanism"/>
    <property type="evidence" value="ECO:0000318"/>
    <property type="project" value="GO_Central"/>
</dbReference>
<dbReference type="GO" id="GO:1902600">
    <property type="term" value="P:proton transmembrane transport"/>
    <property type="evidence" value="ECO:0000305"/>
    <property type="project" value="PomBase"/>
</dbReference>
<dbReference type="FunFam" id="1.20.5.2950:FF:000001">
    <property type="entry name" value="V-type proton ATPase subunit G"/>
    <property type="match status" value="1"/>
</dbReference>
<dbReference type="Gene3D" id="1.20.5.2950">
    <property type="match status" value="1"/>
</dbReference>
<dbReference type="InterPro" id="IPR005124">
    <property type="entry name" value="V-ATPase_G"/>
</dbReference>
<dbReference type="NCBIfam" id="TIGR01147">
    <property type="entry name" value="V_ATP_synt_G"/>
    <property type="match status" value="1"/>
</dbReference>
<dbReference type="PANTHER" id="PTHR12713:SF11">
    <property type="entry name" value="V-TYPE PROTON ATPASE SUBUNIT G"/>
    <property type="match status" value="1"/>
</dbReference>
<dbReference type="PANTHER" id="PTHR12713">
    <property type="entry name" value="VACUOLAR ATP SYNTHASE SUBUNIT G"/>
    <property type="match status" value="1"/>
</dbReference>
<dbReference type="Pfam" id="PF03179">
    <property type="entry name" value="V-ATPase_G"/>
    <property type="match status" value="1"/>
</dbReference>
<protein>
    <recommendedName>
        <fullName>V-type proton ATPase subunit G</fullName>
        <shortName>V-ATPase subunit G</shortName>
    </recommendedName>
    <alternativeName>
        <fullName>Vacuolar proton pump subunit G</fullName>
    </alternativeName>
</protein>
<proteinExistence type="inferred from homology"/>